<comment type="function">
    <text evidence="1 4">Component of the NatC N-terminal acetyltransferase, which associates with the ribosome to acetylate nascent protein chains in a cotranslational manner (PubMed:34019809). NatC acetylates protein N-termini starting with methionine, followed by a hydrophobic or amphipathic amino acid, with amino acids at positions 3 and 4 also contributing to NatC recognition (PubMed:34019809). The first 4 amino acids of cognate substrates are recognized at the Naa30-Naa35 interface (PubMed:34019809). NatC-dependent acetylation targets various substrate proteins to specific subcellular sites (By similarity).</text>
</comment>
<comment type="subunit">
    <text evidence="4">Component of the N-terminal acetyltransferase C (NatC) complex, composed of the catalytic subunit Naa30, a large auxiliary subunit Naa35 and a small auxiliary subunit Naa38.</text>
</comment>
<comment type="subcellular location">
    <subcellularLocation>
        <location evidence="3">Endoplasmic reticulum</location>
    </subcellularLocation>
</comment>
<accession>O43080</accession>
<accession>A0AAN2H7X8</accession>
<keyword id="KW-0002">3D-structure</keyword>
<keyword id="KW-0256">Endoplasmic reticulum</keyword>
<keyword id="KW-1185">Reference proteome</keyword>
<gene>
    <name type="primary">naa38</name>
    <name type="synonym">mak31</name>
    <name evidence="5" type="ORF">SPBC947.03c</name>
</gene>
<protein>
    <recommendedName>
        <fullName>N-alpha-acetyltransferase 38, NatC auxiliary subunit</fullName>
    </recommendedName>
    <alternativeName>
        <fullName>N-terminal acetyltransferase C complex subunit naa38</fullName>
    </alternativeName>
</protein>
<feature type="chain" id="PRO_0000304083" description="N-alpha-acetyltransferase 38, NatC auxiliary subunit">
    <location>
        <begin position="1"/>
        <end position="72"/>
    </location>
</feature>
<feature type="domain" description="Sm" evidence="2">
    <location>
        <begin position="3"/>
        <end position="72"/>
    </location>
</feature>
<feature type="helix" evidence="7">
    <location>
        <begin position="4"/>
        <end position="10"/>
    </location>
</feature>
<feature type="turn" evidence="7">
    <location>
        <begin position="11"/>
        <end position="13"/>
    </location>
</feature>
<feature type="strand" evidence="7">
    <location>
        <begin position="14"/>
        <end position="19"/>
    </location>
</feature>
<feature type="strand" evidence="7">
    <location>
        <begin position="21"/>
        <end position="23"/>
    </location>
</feature>
<feature type="strand" evidence="7">
    <location>
        <begin position="25"/>
        <end position="33"/>
    </location>
</feature>
<feature type="strand" evidence="7">
    <location>
        <begin position="40"/>
        <end position="45"/>
    </location>
</feature>
<feature type="helix" evidence="7">
    <location>
        <begin position="62"/>
        <end position="64"/>
    </location>
</feature>
<feature type="strand" evidence="7">
    <location>
        <begin position="67"/>
        <end position="70"/>
    </location>
</feature>
<name>NAA38_SCHPO</name>
<proteinExistence type="evidence at protein level"/>
<dbReference type="EMBL" id="CU329671">
    <property type="protein sequence ID" value="CAK9839572.1"/>
    <property type="molecule type" value="Genomic_DNA"/>
</dbReference>
<dbReference type="PIR" id="T40779">
    <property type="entry name" value="T40779"/>
</dbReference>
<dbReference type="RefSeq" id="NP_595273.2">
    <property type="nucleotide sequence ID" value="NM_001021180.3"/>
</dbReference>
<dbReference type="PDB" id="7L1K">
    <property type="method" value="EM"/>
    <property type="resolution" value="3.16 A"/>
    <property type="chains" value="C=1-72"/>
</dbReference>
<dbReference type="PDBsum" id="7L1K"/>
<dbReference type="EMDB" id="EMD-23110"/>
<dbReference type="SMR" id="O43080"/>
<dbReference type="BioGRID" id="277786">
    <property type="interactions" value="33"/>
</dbReference>
<dbReference type="FunCoup" id="O43080">
    <property type="interactions" value="95"/>
</dbReference>
<dbReference type="STRING" id="284812.O43080"/>
<dbReference type="PaxDb" id="4896-SPBC947.03c.1"/>
<dbReference type="EnsemblFungi" id="SPBC947.03c.1">
    <property type="protein sequence ID" value="SPBC947.03c.1:pep"/>
    <property type="gene ID" value="SPBC947.03c"/>
</dbReference>
<dbReference type="GeneID" id="2541272"/>
<dbReference type="KEGG" id="spo:2541272"/>
<dbReference type="PomBase" id="SPBC947.03c">
    <property type="gene designation" value="naa38"/>
</dbReference>
<dbReference type="VEuPathDB" id="FungiDB:SPBC947.03c"/>
<dbReference type="eggNOG" id="ENOG502RS0H">
    <property type="taxonomic scope" value="Eukaryota"/>
</dbReference>
<dbReference type="HOGENOM" id="CLU_2098243_0_0_1"/>
<dbReference type="InParanoid" id="O43080"/>
<dbReference type="PhylomeDB" id="O43080"/>
<dbReference type="PRO" id="PR:O43080"/>
<dbReference type="Proteomes" id="UP000002485">
    <property type="component" value="Chromosome II"/>
</dbReference>
<dbReference type="GO" id="GO:0005783">
    <property type="term" value="C:endoplasmic reticulum"/>
    <property type="evidence" value="ECO:0007005"/>
    <property type="project" value="PomBase"/>
</dbReference>
<dbReference type="GO" id="GO:0016020">
    <property type="term" value="C:membrane"/>
    <property type="evidence" value="ECO:0007669"/>
    <property type="project" value="UniProtKB-KW"/>
</dbReference>
<dbReference type="GO" id="GO:0031417">
    <property type="term" value="C:NatC complex"/>
    <property type="evidence" value="ECO:0007669"/>
    <property type="project" value="InterPro"/>
</dbReference>
<dbReference type="GO" id="GO:0003723">
    <property type="term" value="F:RNA binding"/>
    <property type="evidence" value="ECO:0007669"/>
    <property type="project" value="InterPro"/>
</dbReference>
<dbReference type="GO" id="GO:0051604">
    <property type="term" value="P:protein maturation"/>
    <property type="evidence" value="ECO:0000303"/>
    <property type="project" value="PomBase"/>
</dbReference>
<dbReference type="CDD" id="cd06168">
    <property type="entry name" value="LSMD1"/>
    <property type="match status" value="1"/>
</dbReference>
<dbReference type="FunFam" id="2.30.30.100:FF:000028">
    <property type="entry name" value="N-alpha-acetyltransferase 38, NatC auxiliary subunit"/>
    <property type="match status" value="1"/>
</dbReference>
<dbReference type="Gene3D" id="2.30.30.100">
    <property type="match status" value="1"/>
</dbReference>
<dbReference type="InterPro" id="IPR010920">
    <property type="entry name" value="LSM_dom_sf"/>
</dbReference>
<dbReference type="InterPro" id="IPR034110">
    <property type="entry name" value="LSMD1_Sm"/>
</dbReference>
<dbReference type="InterPro" id="IPR047575">
    <property type="entry name" value="Sm"/>
</dbReference>
<dbReference type="InterPro" id="IPR001163">
    <property type="entry name" value="Sm_dom_euk/arc"/>
</dbReference>
<dbReference type="InterPro" id="IPR050914">
    <property type="entry name" value="snRNP_SmB/NAA38-like"/>
</dbReference>
<dbReference type="PANTHER" id="PTHR10701:SF5">
    <property type="entry name" value="N-ALPHA-ACETYLTRANSFERASE 38, NATC AUXILIARY SUBUNIT"/>
    <property type="match status" value="1"/>
</dbReference>
<dbReference type="PANTHER" id="PTHR10701">
    <property type="entry name" value="SMALL NUCLEAR RIBONUCLEOPROTEIN-ASSOCIATED PROTEIN B AND N"/>
    <property type="match status" value="1"/>
</dbReference>
<dbReference type="Pfam" id="PF01423">
    <property type="entry name" value="LSM"/>
    <property type="match status" value="1"/>
</dbReference>
<dbReference type="SMART" id="SM00651">
    <property type="entry name" value="Sm"/>
    <property type="match status" value="1"/>
</dbReference>
<dbReference type="SUPFAM" id="SSF50182">
    <property type="entry name" value="Sm-like ribonucleoproteins"/>
    <property type="match status" value="1"/>
</dbReference>
<dbReference type="PROSITE" id="PS52002">
    <property type="entry name" value="SM"/>
    <property type="match status" value="1"/>
</dbReference>
<evidence type="ECO:0000250" key="1">
    <source>
        <dbReference type="UniProtKB" id="P23059"/>
    </source>
</evidence>
<evidence type="ECO:0000255" key="2">
    <source>
        <dbReference type="PROSITE-ProRule" id="PRU01346"/>
    </source>
</evidence>
<evidence type="ECO:0000269" key="3">
    <source>
    </source>
</evidence>
<evidence type="ECO:0000269" key="4">
    <source>
    </source>
</evidence>
<evidence type="ECO:0000312" key="5">
    <source>
        <dbReference type="PomBase" id="SPBC947.03c"/>
    </source>
</evidence>
<evidence type="ECO:0007744" key="6">
    <source>
        <dbReference type="PDB" id="7L1K"/>
    </source>
</evidence>
<evidence type="ECO:0007829" key="7">
    <source>
        <dbReference type="PDB" id="7L1K"/>
    </source>
</evidence>
<reference key="1">
    <citation type="journal article" date="2002" name="Nature">
        <title>The genome sequence of Schizosaccharomyces pombe.</title>
        <authorList>
            <person name="Wood V."/>
            <person name="Gwilliam R."/>
            <person name="Rajandream M.A."/>
            <person name="Lyne M.H."/>
            <person name="Lyne R."/>
            <person name="Stewart A."/>
            <person name="Sgouros J.G."/>
            <person name="Peat N."/>
            <person name="Hayles J."/>
            <person name="Baker S.G."/>
            <person name="Basham D."/>
            <person name="Bowman S."/>
            <person name="Brooks K."/>
            <person name="Brown D."/>
            <person name="Brown S."/>
            <person name="Chillingworth T."/>
            <person name="Churcher C.M."/>
            <person name="Collins M."/>
            <person name="Connor R."/>
            <person name="Cronin A."/>
            <person name="Davis P."/>
            <person name="Feltwell T."/>
            <person name="Fraser A."/>
            <person name="Gentles S."/>
            <person name="Goble A."/>
            <person name="Hamlin N."/>
            <person name="Harris D.E."/>
            <person name="Hidalgo J."/>
            <person name="Hodgson G."/>
            <person name="Holroyd S."/>
            <person name="Hornsby T."/>
            <person name="Howarth S."/>
            <person name="Huckle E.J."/>
            <person name="Hunt S."/>
            <person name="Jagels K."/>
            <person name="James K.D."/>
            <person name="Jones L."/>
            <person name="Jones M."/>
            <person name="Leather S."/>
            <person name="McDonald S."/>
            <person name="McLean J."/>
            <person name="Mooney P."/>
            <person name="Moule S."/>
            <person name="Mungall K.L."/>
            <person name="Murphy L.D."/>
            <person name="Niblett D."/>
            <person name="Odell C."/>
            <person name="Oliver K."/>
            <person name="O'Neil S."/>
            <person name="Pearson D."/>
            <person name="Quail M.A."/>
            <person name="Rabbinowitsch E."/>
            <person name="Rutherford K.M."/>
            <person name="Rutter S."/>
            <person name="Saunders D."/>
            <person name="Seeger K."/>
            <person name="Sharp S."/>
            <person name="Skelton J."/>
            <person name="Simmonds M.N."/>
            <person name="Squares R."/>
            <person name="Squares S."/>
            <person name="Stevens K."/>
            <person name="Taylor K."/>
            <person name="Taylor R.G."/>
            <person name="Tivey A."/>
            <person name="Walsh S.V."/>
            <person name="Warren T."/>
            <person name="Whitehead S."/>
            <person name="Woodward J.R."/>
            <person name="Volckaert G."/>
            <person name="Aert R."/>
            <person name="Robben J."/>
            <person name="Grymonprez B."/>
            <person name="Weltjens I."/>
            <person name="Vanstreels E."/>
            <person name="Rieger M."/>
            <person name="Schaefer M."/>
            <person name="Mueller-Auer S."/>
            <person name="Gabel C."/>
            <person name="Fuchs M."/>
            <person name="Duesterhoeft A."/>
            <person name="Fritzc C."/>
            <person name="Holzer E."/>
            <person name="Moestl D."/>
            <person name="Hilbert H."/>
            <person name="Borzym K."/>
            <person name="Langer I."/>
            <person name="Beck A."/>
            <person name="Lehrach H."/>
            <person name="Reinhardt R."/>
            <person name="Pohl T.M."/>
            <person name="Eger P."/>
            <person name="Zimmermann W."/>
            <person name="Wedler H."/>
            <person name="Wambutt R."/>
            <person name="Purnelle B."/>
            <person name="Goffeau A."/>
            <person name="Cadieu E."/>
            <person name="Dreano S."/>
            <person name="Gloux S."/>
            <person name="Lelaure V."/>
            <person name="Mottier S."/>
            <person name="Galibert F."/>
            <person name="Aves S.J."/>
            <person name="Xiang Z."/>
            <person name="Hunt C."/>
            <person name="Moore K."/>
            <person name="Hurst S.M."/>
            <person name="Lucas M."/>
            <person name="Rochet M."/>
            <person name="Gaillardin C."/>
            <person name="Tallada V.A."/>
            <person name="Garzon A."/>
            <person name="Thode G."/>
            <person name="Daga R.R."/>
            <person name="Cruzado L."/>
            <person name="Jimenez J."/>
            <person name="Sanchez M."/>
            <person name="del Rey F."/>
            <person name="Benito J."/>
            <person name="Dominguez A."/>
            <person name="Revuelta J.L."/>
            <person name="Moreno S."/>
            <person name="Armstrong J."/>
            <person name="Forsburg S.L."/>
            <person name="Cerutti L."/>
            <person name="Lowe T."/>
            <person name="McCombie W.R."/>
            <person name="Paulsen I."/>
            <person name="Potashkin J."/>
            <person name="Shpakovski G.V."/>
            <person name="Ussery D."/>
            <person name="Barrell B.G."/>
            <person name="Nurse P."/>
        </authorList>
    </citation>
    <scope>NUCLEOTIDE SEQUENCE [LARGE SCALE GENOMIC DNA]</scope>
    <source>
        <strain>972 / ATCC 24843</strain>
    </source>
</reference>
<reference key="2">
    <citation type="journal article" date="2006" name="Nat. Biotechnol.">
        <title>ORFeome cloning and global analysis of protein localization in the fission yeast Schizosaccharomyces pombe.</title>
        <authorList>
            <person name="Matsuyama A."/>
            <person name="Arai R."/>
            <person name="Yashiroda Y."/>
            <person name="Shirai A."/>
            <person name="Kamata A."/>
            <person name="Sekido S."/>
            <person name="Kobayashi Y."/>
            <person name="Hashimoto A."/>
            <person name="Hamamoto M."/>
            <person name="Hiraoka Y."/>
            <person name="Horinouchi S."/>
            <person name="Yoshida M."/>
        </authorList>
    </citation>
    <scope>SUBCELLULAR LOCATION [LARGE SCALE ANALYSIS]</scope>
</reference>
<reference evidence="6" key="3">
    <citation type="journal article" date="2021" name="Structure">
        <title>Molecular mechanism of N-terminal acetylation by the ternary NatC complex.</title>
        <authorList>
            <person name="Deng S."/>
            <person name="Gottlieb L."/>
            <person name="Pan B."/>
            <person name="Supplee J."/>
            <person name="Wei X."/>
            <person name="Petersson E.J."/>
            <person name="Marmorstein R."/>
        </authorList>
    </citation>
    <scope>STRUCTURE BY ELECTRON MICROSCOPY (3.16 ANGSTROMS)</scope>
    <scope>FUNCTION</scope>
    <scope>SUBUNIT</scope>
</reference>
<organism>
    <name type="scientific">Schizosaccharomyces pombe (strain 972 / ATCC 24843)</name>
    <name type="common">Fission yeast</name>
    <dbReference type="NCBI Taxonomy" id="284812"/>
    <lineage>
        <taxon>Eukaryota</taxon>
        <taxon>Fungi</taxon>
        <taxon>Dikarya</taxon>
        <taxon>Ascomycota</taxon>
        <taxon>Taphrinomycotina</taxon>
        <taxon>Schizosaccharomycetes</taxon>
        <taxon>Schizosaccharomycetales</taxon>
        <taxon>Schizosaccharomycetaceae</taxon>
        <taxon>Schizosaccharomyces</taxon>
    </lineage>
</organism>
<sequence length="72" mass="8126">MENGEILLTSWLNRSVHIEIFDERKFIGKFLCTDREGAAILSNTTEYNKGFSRALGLVVIPGKHIKSFSVRA</sequence>